<comment type="function">
    <text evidence="1">Catalyzes the conversion of 3-deoxy-D-arabino-heptulosonate 7-phosphate (DAHP) to dehydroquinate (DHQ).</text>
</comment>
<comment type="catalytic activity">
    <reaction evidence="1">
        <text>7-phospho-2-dehydro-3-deoxy-D-arabino-heptonate = 3-dehydroquinate + phosphate</text>
        <dbReference type="Rhea" id="RHEA:21968"/>
        <dbReference type="ChEBI" id="CHEBI:32364"/>
        <dbReference type="ChEBI" id="CHEBI:43474"/>
        <dbReference type="ChEBI" id="CHEBI:58394"/>
        <dbReference type="EC" id="4.2.3.4"/>
    </reaction>
</comment>
<comment type="cofactor">
    <cofactor evidence="1">
        <name>NAD(+)</name>
        <dbReference type="ChEBI" id="CHEBI:57540"/>
    </cofactor>
</comment>
<comment type="cofactor">
    <cofactor evidence="1">
        <name>Co(2+)</name>
        <dbReference type="ChEBI" id="CHEBI:48828"/>
    </cofactor>
    <cofactor evidence="1">
        <name>Zn(2+)</name>
        <dbReference type="ChEBI" id="CHEBI:29105"/>
    </cofactor>
    <text evidence="1">Binds 1 divalent metal cation per subunit. Can use either Co(2+) or Zn(2+).</text>
</comment>
<comment type="pathway">
    <text evidence="1">Metabolic intermediate biosynthesis; chorismate biosynthesis; chorismate from D-erythrose 4-phosphate and phosphoenolpyruvate: step 2/7.</text>
</comment>
<comment type="subcellular location">
    <subcellularLocation>
        <location evidence="1">Cytoplasm</location>
    </subcellularLocation>
</comment>
<comment type="similarity">
    <text evidence="1">Belongs to the sugar phosphate cyclases superfamily. Dehydroquinate synthase family.</text>
</comment>
<organism>
    <name type="scientific">Rhizobium meliloti (strain 1021)</name>
    <name type="common">Ensifer meliloti</name>
    <name type="synonym">Sinorhizobium meliloti</name>
    <dbReference type="NCBI Taxonomy" id="266834"/>
    <lineage>
        <taxon>Bacteria</taxon>
        <taxon>Pseudomonadati</taxon>
        <taxon>Pseudomonadota</taxon>
        <taxon>Alphaproteobacteria</taxon>
        <taxon>Hyphomicrobiales</taxon>
        <taxon>Rhizobiaceae</taxon>
        <taxon>Sinorhizobium/Ensifer group</taxon>
        <taxon>Sinorhizobium</taxon>
    </lineage>
</organism>
<gene>
    <name evidence="1" type="primary">aroB</name>
    <name type="ordered locus">R02676</name>
    <name type="ORF">SMc00696</name>
</gene>
<protein>
    <recommendedName>
        <fullName evidence="1">3-dehydroquinate synthase</fullName>
        <shortName evidence="1">DHQS</shortName>
        <ecNumber evidence="1">4.2.3.4</ecNumber>
    </recommendedName>
</protein>
<sequence length="377" mass="40246">MTSHVMPTAERKVRVDLAERSYDILIGPGLIAAAGKEIASRLKGRKMAVITDENVAPRYLEPLMASLGESGIEAVSLILPAGEKTKSFEHLIPVCEAILGARIERNDAVIALGGGVIGDLTGFAAGIVRRGSRFIQIPTSLLAQVDSSVGGKTGINSAHGKNLIGVFHQPDLVLADTAALDTLSPREFRAGYAEVAKYGLIDKPEFFEWLEKNWQAVFAGGPARIEAIAVSCQAKADVVAADERENGRRALLNLGHTFGHALEAATDYDSKRLVHGEGVAIGMVLAHEFSARMNLASPDDARRVEAHLKTVGLPTRLADIPGALPPADRLMEAIAQDKKVKGGKLTFILTRGIGQSFVADDVPSSEVLSFLTEKHPR</sequence>
<dbReference type="EC" id="4.2.3.4" evidence="1"/>
<dbReference type="EMBL" id="AL591688">
    <property type="protein sequence ID" value="CAC47255.1"/>
    <property type="molecule type" value="Genomic_DNA"/>
</dbReference>
<dbReference type="RefSeq" id="NP_386782.1">
    <property type="nucleotide sequence ID" value="NC_003047.1"/>
</dbReference>
<dbReference type="RefSeq" id="WP_010970120.1">
    <property type="nucleotide sequence ID" value="NC_003047.1"/>
</dbReference>
<dbReference type="SMR" id="Q92ME7"/>
<dbReference type="EnsemblBacteria" id="CAC47255">
    <property type="protein sequence ID" value="CAC47255"/>
    <property type="gene ID" value="SMc00696"/>
</dbReference>
<dbReference type="KEGG" id="sme:SMc00696"/>
<dbReference type="PATRIC" id="fig|266834.11.peg.4178"/>
<dbReference type="eggNOG" id="COG0337">
    <property type="taxonomic scope" value="Bacteria"/>
</dbReference>
<dbReference type="HOGENOM" id="CLU_001201_0_2_5"/>
<dbReference type="OrthoDB" id="9806583at2"/>
<dbReference type="UniPathway" id="UPA00053">
    <property type="reaction ID" value="UER00085"/>
</dbReference>
<dbReference type="Proteomes" id="UP000001976">
    <property type="component" value="Chromosome"/>
</dbReference>
<dbReference type="GO" id="GO:0005737">
    <property type="term" value="C:cytoplasm"/>
    <property type="evidence" value="ECO:0007669"/>
    <property type="project" value="UniProtKB-SubCell"/>
</dbReference>
<dbReference type="GO" id="GO:0003856">
    <property type="term" value="F:3-dehydroquinate synthase activity"/>
    <property type="evidence" value="ECO:0007669"/>
    <property type="project" value="UniProtKB-UniRule"/>
</dbReference>
<dbReference type="GO" id="GO:0046872">
    <property type="term" value="F:metal ion binding"/>
    <property type="evidence" value="ECO:0007669"/>
    <property type="project" value="UniProtKB-KW"/>
</dbReference>
<dbReference type="GO" id="GO:0000166">
    <property type="term" value="F:nucleotide binding"/>
    <property type="evidence" value="ECO:0007669"/>
    <property type="project" value="UniProtKB-KW"/>
</dbReference>
<dbReference type="GO" id="GO:0008652">
    <property type="term" value="P:amino acid biosynthetic process"/>
    <property type="evidence" value="ECO:0007669"/>
    <property type="project" value="UniProtKB-KW"/>
</dbReference>
<dbReference type="GO" id="GO:0009073">
    <property type="term" value="P:aromatic amino acid family biosynthetic process"/>
    <property type="evidence" value="ECO:0007669"/>
    <property type="project" value="UniProtKB-KW"/>
</dbReference>
<dbReference type="GO" id="GO:0009423">
    <property type="term" value="P:chorismate biosynthetic process"/>
    <property type="evidence" value="ECO:0007669"/>
    <property type="project" value="UniProtKB-UniRule"/>
</dbReference>
<dbReference type="CDD" id="cd08195">
    <property type="entry name" value="DHQS"/>
    <property type="match status" value="1"/>
</dbReference>
<dbReference type="FunFam" id="3.40.50.1970:FF:000007">
    <property type="entry name" value="Pentafunctional AROM polypeptide"/>
    <property type="match status" value="1"/>
</dbReference>
<dbReference type="Gene3D" id="3.40.50.1970">
    <property type="match status" value="1"/>
</dbReference>
<dbReference type="Gene3D" id="1.20.1090.10">
    <property type="entry name" value="Dehydroquinate synthase-like - alpha domain"/>
    <property type="match status" value="1"/>
</dbReference>
<dbReference type="HAMAP" id="MF_00110">
    <property type="entry name" value="DHQ_synthase"/>
    <property type="match status" value="1"/>
</dbReference>
<dbReference type="InterPro" id="IPR050071">
    <property type="entry name" value="Dehydroquinate_synthase"/>
</dbReference>
<dbReference type="InterPro" id="IPR016037">
    <property type="entry name" value="DHQ_synth_AroB"/>
</dbReference>
<dbReference type="InterPro" id="IPR030963">
    <property type="entry name" value="DHQ_synth_fam"/>
</dbReference>
<dbReference type="InterPro" id="IPR030960">
    <property type="entry name" value="DHQS/DOIS_N"/>
</dbReference>
<dbReference type="InterPro" id="IPR056179">
    <property type="entry name" value="DHQS_C"/>
</dbReference>
<dbReference type="NCBIfam" id="TIGR01357">
    <property type="entry name" value="aroB"/>
    <property type="match status" value="1"/>
</dbReference>
<dbReference type="PANTHER" id="PTHR43622">
    <property type="entry name" value="3-DEHYDROQUINATE SYNTHASE"/>
    <property type="match status" value="1"/>
</dbReference>
<dbReference type="PANTHER" id="PTHR43622:SF7">
    <property type="entry name" value="3-DEHYDROQUINATE SYNTHASE, CHLOROPLASTIC"/>
    <property type="match status" value="1"/>
</dbReference>
<dbReference type="Pfam" id="PF01761">
    <property type="entry name" value="DHQ_synthase"/>
    <property type="match status" value="1"/>
</dbReference>
<dbReference type="Pfam" id="PF24621">
    <property type="entry name" value="DHQS_C"/>
    <property type="match status" value="1"/>
</dbReference>
<dbReference type="PIRSF" id="PIRSF001455">
    <property type="entry name" value="DHQ_synth"/>
    <property type="match status" value="1"/>
</dbReference>
<dbReference type="SUPFAM" id="SSF56796">
    <property type="entry name" value="Dehydroquinate synthase-like"/>
    <property type="match status" value="1"/>
</dbReference>
<evidence type="ECO:0000255" key="1">
    <source>
        <dbReference type="HAMAP-Rule" id="MF_00110"/>
    </source>
</evidence>
<proteinExistence type="inferred from homology"/>
<name>AROB_RHIME</name>
<feature type="chain" id="PRO_0000140773" description="3-dehydroquinate synthase">
    <location>
        <begin position="1"/>
        <end position="377"/>
    </location>
</feature>
<feature type="binding site" evidence="1">
    <location>
        <begin position="115"/>
        <end position="119"/>
    </location>
    <ligand>
        <name>NAD(+)</name>
        <dbReference type="ChEBI" id="CHEBI:57540"/>
    </ligand>
</feature>
<feature type="binding site" evidence="1">
    <location>
        <begin position="139"/>
        <end position="140"/>
    </location>
    <ligand>
        <name>NAD(+)</name>
        <dbReference type="ChEBI" id="CHEBI:57540"/>
    </ligand>
</feature>
<feature type="binding site" evidence="1">
    <location>
        <position position="152"/>
    </location>
    <ligand>
        <name>NAD(+)</name>
        <dbReference type="ChEBI" id="CHEBI:57540"/>
    </ligand>
</feature>
<feature type="binding site" evidence="1">
    <location>
        <position position="161"/>
    </location>
    <ligand>
        <name>NAD(+)</name>
        <dbReference type="ChEBI" id="CHEBI:57540"/>
    </ligand>
</feature>
<feature type="binding site" evidence="1">
    <location>
        <position position="194"/>
    </location>
    <ligand>
        <name>Zn(2+)</name>
        <dbReference type="ChEBI" id="CHEBI:29105"/>
    </ligand>
</feature>
<feature type="binding site" evidence="1">
    <location>
        <position position="256"/>
    </location>
    <ligand>
        <name>Zn(2+)</name>
        <dbReference type="ChEBI" id="CHEBI:29105"/>
    </ligand>
</feature>
<feature type="binding site" evidence="1">
    <location>
        <position position="275"/>
    </location>
    <ligand>
        <name>Zn(2+)</name>
        <dbReference type="ChEBI" id="CHEBI:29105"/>
    </ligand>
</feature>
<reference key="1">
    <citation type="journal article" date="2001" name="Proc. Natl. Acad. Sci. U.S.A.">
        <title>Analysis of the chromosome sequence of the legume symbiont Sinorhizobium meliloti strain 1021.</title>
        <authorList>
            <person name="Capela D."/>
            <person name="Barloy-Hubler F."/>
            <person name="Gouzy J."/>
            <person name="Bothe G."/>
            <person name="Ampe F."/>
            <person name="Batut J."/>
            <person name="Boistard P."/>
            <person name="Becker A."/>
            <person name="Boutry M."/>
            <person name="Cadieu E."/>
            <person name="Dreano S."/>
            <person name="Gloux S."/>
            <person name="Godrie T."/>
            <person name="Goffeau A."/>
            <person name="Kahn D."/>
            <person name="Kiss E."/>
            <person name="Lelaure V."/>
            <person name="Masuy D."/>
            <person name="Pohl T."/>
            <person name="Portetelle D."/>
            <person name="Puehler A."/>
            <person name="Purnelle B."/>
            <person name="Ramsperger U."/>
            <person name="Renard C."/>
            <person name="Thebault P."/>
            <person name="Vandenbol M."/>
            <person name="Weidner S."/>
            <person name="Galibert F."/>
        </authorList>
    </citation>
    <scope>NUCLEOTIDE SEQUENCE [LARGE SCALE GENOMIC DNA]</scope>
    <source>
        <strain>1021</strain>
    </source>
</reference>
<reference key="2">
    <citation type="journal article" date="2001" name="Science">
        <title>The composite genome of the legume symbiont Sinorhizobium meliloti.</title>
        <authorList>
            <person name="Galibert F."/>
            <person name="Finan T.M."/>
            <person name="Long S.R."/>
            <person name="Puehler A."/>
            <person name="Abola P."/>
            <person name="Ampe F."/>
            <person name="Barloy-Hubler F."/>
            <person name="Barnett M.J."/>
            <person name="Becker A."/>
            <person name="Boistard P."/>
            <person name="Bothe G."/>
            <person name="Boutry M."/>
            <person name="Bowser L."/>
            <person name="Buhrmester J."/>
            <person name="Cadieu E."/>
            <person name="Capela D."/>
            <person name="Chain P."/>
            <person name="Cowie A."/>
            <person name="Davis R.W."/>
            <person name="Dreano S."/>
            <person name="Federspiel N.A."/>
            <person name="Fisher R.F."/>
            <person name="Gloux S."/>
            <person name="Godrie T."/>
            <person name="Goffeau A."/>
            <person name="Golding B."/>
            <person name="Gouzy J."/>
            <person name="Gurjal M."/>
            <person name="Hernandez-Lucas I."/>
            <person name="Hong A."/>
            <person name="Huizar L."/>
            <person name="Hyman R.W."/>
            <person name="Jones T."/>
            <person name="Kahn D."/>
            <person name="Kahn M.L."/>
            <person name="Kalman S."/>
            <person name="Keating D.H."/>
            <person name="Kiss E."/>
            <person name="Komp C."/>
            <person name="Lelaure V."/>
            <person name="Masuy D."/>
            <person name="Palm C."/>
            <person name="Peck M.C."/>
            <person name="Pohl T.M."/>
            <person name="Portetelle D."/>
            <person name="Purnelle B."/>
            <person name="Ramsperger U."/>
            <person name="Surzycki R."/>
            <person name="Thebault P."/>
            <person name="Vandenbol M."/>
            <person name="Vorhoelter F.J."/>
            <person name="Weidner S."/>
            <person name="Wells D.H."/>
            <person name="Wong K."/>
            <person name="Yeh K.-C."/>
            <person name="Batut J."/>
        </authorList>
    </citation>
    <scope>NUCLEOTIDE SEQUENCE [LARGE SCALE GENOMIC DNA]</scope>
    <source>
        <strain>1021</strain>
    </source>
</reference>
<accession>Q92ME7</accession>
<keyword id="KW-0028">Amino-acid biosynthesis</keyword>
<keyword id="KW-0057">Aromatic amino acid biosynthesis</keyword>
<keyword id="KW-0170">Cobalt</keyword>
<keyword id="KW-0963">Cytoplasm</keyword>
<keyword id="KW-0456">Lyase</keyword>
<keyword id="KW-0479">Metal-binding</keyword>
<keyword id="KW-0520">NAD</keyword>
<keyword id="KW-0547">Nucleotide-binding</keyword>
<keyword id="KW-1185">Reference proteome</keyword>
<keyword id="KW-0862">Zinc</keyword>